<feature type="chain" id="PRO_0000045200" description="Phosphatidylserine decarboxylase proenzyme 2">
    <location>
        <begin position="1"/>
        <end position="1138"/>
    </location>
</feature>
<feature type="chain" id="PRO_0000045201" description="Phosphatidylserine decarboxylase 2 beta chain" evidence="3">
    <location>
        <begin position="1"/>
        <end position="1042"/>
    </location>
</feature>
<feature type="chain" id="PRO_0000045202" description="Phosphatidylserine decarboxylase 2 alpha chain" evidence="3">
    <location>
        <begin position="1043"/>
        <end position="1138"/>
    </location>
</feature>
<feature type="domain" description="C2 1" evidence="4">
    <location>
        <begin position="1"/>
        <end position="122"/>
    </location>
</feature>
<feature type="domain" description="C2 2" evidence="4">
    <location>
        <begin position="478"/>
        <end position="600"/>
    </location>
</feature>
<feature type="region of interest" description="Disordered" evidence="5">
    <location>
        <begin position="90"/>
        <end position="166"/>
    </location>
</feature>
<feature type="region of interest" description="Disordered" evidence="5">
    <location>
        <begin position="269"/>
        <end position="305"/>
    </location>
</feature>
<feature type="region of interest" description="Disordered" evidence="5">
    <location>
        <begin position="413"/>
        <end position="448"/>
    </location>
</feature>
<feature type="compositionally biased region" description="Low complexity" evidence="5">
    <location>
        <begin position="98"/>
        <end position="121"/>
    </location>
</feature>
<feature type="compositionally biased region" description="Polar residues" evidence="5">
    <location>
        <begin position="125"/>
        <end position="135"/>
    </location>
</feature>
<feature type="compositionally biased region" description="Low complexity" evidence="5">
    <location>
        <begin position="136"/>
        <end position="166"/>
    </location>
</feature>
<feature type="compositionally biased region" description="Basic and acidic residues" evidence="5">
    <location>
        <begin position="293"/>
        <end position="305"/>
    </location>
</feature>
<feature type="compositionally biased region" description="Acidic residues" evidence="5">
    <location>
        <begin position="421"/>
        <end position="448"/>
    </location>
</feature>
<feature type="active site" description="Charge relay system; for autoendoproteolytic cleavage activity" evidence="1 3">
    <location>
        <position position="899"/>
    </location>
</feature>
<feature type="active site" description="Charge relay system; for autoendoproteolytic cleavage activity" evidence="1 3">
    <location>
        <position position="956"/>
    </location>
</feature>
<feature type="active site" description="Charge relay system; for autoendoproteolytic cleavage activity" evidence="1 3">
    <location>
        <position position="1043"/>
    </location>
</feature>
<feature type="active site" description="Schiff-base intermediate with substrate; via pyruvic acid; for decarboxylase activity" evidence="2 3">
    <location>
        <position position="1043"/>
    </location>
</feature>
<feature type="binding site" evidence="4">
    <location>
        <position position="571"/>
    </location>
    <ligand>
        <name>Ca(2+)</name>
        <dbReference type="ChEBI" id="CHEBI:29108"/>
    </ligand>
</feature>
<feature type="binding site" evidence="4">
    <location>
        <position position="574"/>
    </location>
    <ligand>
        <name>Ca(2+)</name>
        <dbReference type="ChEBI" id="CHEBI:29108"/>
    </ligand>
</feature>
<feature type="binding site" evidence="4">
    <location>
        <position position="577"/>
    </location>
    <ligand>
        <name>Ca(2+)</name>
        <dbReference type="ChEBI" id="CHEBI:29108"/>
    </ligand>
</feature>
<feature type="site" description="Cleavage (non-hydrolytic); by autocatalysis" evidence="2 3">
    <location>
        <begin position="1042"/>
        <end position="1043"/>
    </location>
</feature>
<feature type="modified residue" description="Pyruvic acid (Ser); by autocatalysis" evidence="2 3">
    <location>
        <position position="1043"/>
    </location>
</feature>
<feature type="mutagenesis site" description="No processing of the proenzyme, complete loss of activity." evidence="7">
    <original>GGS</original>
    <variation>AAA</variation>
    <location>
        <begin position="1041"/>
        <end position="1043"/>
    </location>
</feature>
<feature type="sequence conflict" description="In Ref. 1; AAA69819." evidence="13" ref="1">
    <original>E</original>
    <variation>G</variation>
    <location>
        <position position="801"/>
    </location>
</feature>
<feature type="sequence conflict" description="In Ref. 1; AAA69819." evidence="13" ref="1">
    <original>Y</original>
    <variation>N</variation>
    <location>
        <position position="974"/>
    </location>
</feature>
<reference key="1">
    <citation type="journal article" date="1995" name="J. Biol. Chem.">
        <title>Phosphatidylserine decarboxylase 2 of Saccharomyces cerevisiae. Cloning and mapping of the gene, heterologous expression, and creation of the null allele.</title>
        <authorList>
            <person name="Trotter P.J."/>
            <person name="Pedretti J."/>
            <person name="Yates R."/>
            <person name="Voelker D.R."/>
        </authorList>
    </citation>
    <scope>NUCLEOTIDE SEQUENCE [GENOMIC DNA]</scope>
    <scope>FUNCTION</scope>
    <scope>SUBCELLULAR LOCATION</scope>
    <source>
        <strain>PTY36</strain>
    </source>
</reference>
<reference key="2">
    <citation type="journal article" date="1997" name="Yeast">
        <title>Sequence analysis of 203 kilobases from Saccharomyces cerevisiae chromosome VII.</title>
        <authorList>
            <person name="Rieger M."/>
            <person name="Brueckner M."/>
            <person name="Schaefer M."/>
            <person name="Mueller-Auer S."/>
        </authorList>
    </citation>
    <scope>NUCLEOTIDE SEQUENCE [GENOMIC DNA]</scope>
    <source>
        <strain>ATCC 204508 / S288c</strain>
    </source>
</reference>
<reference key="3">
    <citation type="journal article" date="1997" name="Nature">
        <title>The nucleotide sequence of Saccharomyces cerevisiae chromosome VII.</title>
        <authorList>
            <person name="Tettelin H."/>
            <person name="Agostoni-Carbone M.L."/>
            <person name="Albermann K."/>
            <person name="Albers M."/>
            <person name="Arroyo J."/>
            <person name="Backes U."/>
            <person name="Barreiros T."/>
            <person name="Bertani I."/>
            <person name="Bjourson A.J."/>
            <person name="Brueckner M."/>
            <person name="Bruschi C.V."/>
            <person name="Carignani G."/>
            <person name="Castagnoli L."/>
            <person name="Cerdan E."/>
            <person name="Clemente M.L."/>
            <person name="Coblenz A."/>
            <person name="Coglievina M."/>
            <person name="Coissac E."/>
            <person name="Defoor E."/>
            <person name="Del Bino S."/>
            <person name="Delius H."/>
            <person name="Delneri D."/>
            <person name="de Wergifosse P."/>
            <person name="Dujon B."/>
            <person name="Durand P."/>
            <person name="Entian K.-D."/>
            <person name="Eraso P."/>
            <person name="Escribano V."/>
            <person name="Fabiani L."/>
            <person name="Fartmann B."/>
            <person name="Feroli F."/>
            <person name="Feuermann M."/>
            <person name="Frontali L."/>
            <person name="Garcia-Gonzalez M."/>
            <person name="Garcia-Saez M.I."/>
            <person name="Goffeau A."/>
            <person name="Guerreiro P."/>
            <person name="Hani J."/>
            <person name="Hansen M."/>
            <person name="Hebling U."/>
            <person name="Hernandez K."/>
            <person name="Heumann K."/>
            <person name="Hilger F."/>
            <person name="Hofmann B."/>
            <person name="Indge K.J."/>
            <person name="James C.M."/>
            <person name="Klima R."/>
            <person name="Koetter P."/>
            <person name="Kramer B."/>
            <person name="Kramer W."/>
            <person name="Lauquin G."/>
            <person name="Leuther H."/>
            <person name="Louis E.J."/>
            <person name="Maillier E."/>
            <person name="Marconi A."/>
            <person name="Martegani E."/>
            <person name="Mazon M.J."/>
            <person name="Mazzoni C."/>
            <person name="McReynolds A.D.K."/>
            <person name="Melchioretto P."/>
            <person name="Mewes H.-W."/>
            <person name="Minenkova O."/>
            <person name="Mueller-Auer S."/>
            <person name="Nawrocki A."/>
            <person name="Netter P."/>
            <person name="Neu R."/>
            <person name="Nombela C."/>
            <person name="Oliver S.G."/>
            <person name="Panzeri L."/>
            <person name="Paoluzi S."/>
            <person name="Plevani P."/>
            <person name="Portetelle D."/>
            <person name="Portillo F."/>
            <person name="Potier S."/>
            <person name="Purnelle B."/>
            <person name="Rieger M."/>
            <person name="Riles L."/>
            <person name="Rinaldi T."/>
            <person name="Robben J."/>
            <person name="Rodrigues-Pousada C."/>
            <person name="Rodriguez-Belmonte E."/>
            <person name="Rodriguez-Torres A.M."/>
            <person name="Rose M."/>
            <person name="Ruzzi M."/>
            <person name="Saliola M."/>
            <person name="Sanchez-Perez M."/>
            <person name="Schaefer B."/>
            <person name="Schaefer M."/>
            <person name="Scharfe M."/>
            <person name="Schmidheini T."/>
            <person name="Schreer A."/>
            <person name="Skala J."/>
            <person name="Souciet J.-L."/>
            <person name="Steensma H.Y."/>
            <person name="Talla E."/>
            <person name="Thierry A."/>
            <person name="Vandenbol M."/>
            <person name="van der Aart Q.J.M."/>
            <person name="Van Dyck L."/>
            <person name="Vanoni M."/>
            <person name="Verhasselt P."/>
            <person name="Voet M."/>
            <person name="Volckaert G."/>
            <person name="Wambutt R."/>
            <person name="Watson M.D."/>
            <person name="Weber N."/>
            <person name="Wedler E."/>
            <person name="Wedler H."/>
            <person name="Wipfli P."/>
            <person name="Wolf K."/>
            <person name="Wright L.F."/>
            <person name="Zaccaria P."/>
            <person name="Zimmermann M."/>
            <person name="Zollner A."/>
            <person name="Kleine K."/>
        </authorList>
    </citation>
    <scope>NUCLEOTIDE SEQUENCE [LARGE SCALE GENOMIC DNA]</scope>
    <source>
        <strain>ATCC 204508 / S288c</strain>
    </source>
</reference>
<reference key="4">
    <citation type="journal article" date="2014" name="G3 (Bethesda)">
        <title>The reference genome sequence of Saccharomyces cerevisiae: Then and now.</title>
        <authorList>
            <person name="Engel S.R."/>
            <person name="Dietrich F.S."/>
            <person name="Fisk D.G."/>
            <person name="Binkley G."/>
            <person name="Balakrishnan R."/>
            <person name="Costanzo M.C."/>
            <person name="Dwight S.S."/>
            <person name="Hitz B.C."/>
            <person name="Karra K."/>
            <person name="Nash R.S."/>
            <person name="Weng S."/>
            <person name="Wong E.D."/>
            <person name="Lloyd P."/>
            <person name="Skrzypek M.S."/>
            <person name="Miyasato S.R."/>
            <person name="Simison M."/>
            <person name="Cherry J.M."/>
        </authorList>
    </citation>
    <scope>GENOME REANNOTATION</scope>
    <source>
        <strain>ATCC 204508 / S288c</strain>
    </source>
</reference>
<reference key="5">
    <citation type="journal article" date="1995" name="J. Biol. Chem.">
        <title>Identification of a non-mitochondrial phosphatidylserine decarboxylase activity (PSD2) in the yeast Saccharomyces cerevisiae.</title>
        <authorList>
            <person name="Trotter P.J."/>
            <person name="Voelker D.R."/>
        </authorList>
    </citation>
    <scope>FUNCTION</scope>
    <scope>CATALYTIC ACTIVITY</scope>
    <scope>SUBCELLULAR LOCATION</scope>
</reference>
<reference key="6">
    <citation type="journal article" date="2001" name="J. Biol. Chem.">
        <title>Characterization of phosphatidylserine transport to the locus of phosphatidylserine decarboxylase 2 in permeabilized yeast.</title>
        <authorList>
            <person name="Wu W.I."/>
            <person name="Voelker D.R."/>
        </authorList>
    </citation>
    <scope>SUBCELLULAR LOCATION</scope>
</reference>
<reference key="7">
    <citation type="journal article" date="2001" name="Mol. Biol. Cell">
        <title>Roles of phosphatidylethanolamine and of its several biosynthetic pathways in Saccharomyces cerevisiae.</title>
        <authorList>
            <person name="Birner R."/>
            <person name="Buergermeister M."/>
            <person name="Schneiter R."/>
            <person name="Daum G."/>
        </authorList>
    </citation>
    <scope>FUNCTION</scope>
</reference>
<reference key="8">
    <citation type="journal article" date="2002" name="J. Biol. Chem.">
        <title>The C2 domain of phosphatidylserine decarboxylase 2 is not required for catalysis but is essential for in vivo function.</title>
        <authorList>
            <person name="Kitamura H."/>
            <person name="Wu W.I."/>
            <person name="Voelker D.R."/>
        </authorList>
    </citation>
    <scope>DOMAIN</scope>
</reference>
<reference key="9">
    <citation type="journal article" date="2008" name="Mol. Cell. Proteomics">
        <title>A multidimensional chromatography technology for in-depth phosphoproteome analysis.</title>
        <authorList>
            <person name="Albuquerque C.P."/>
            <person name="Smolka M.B."/>
            <person name="Payne S.H."/>
            <person name="Bafna V."/>
            <person name="Eng J."/>
            <person name="Zhou H."/>
        </authorList>
    </citation>
    <scope>IDENTIFICATION BY MASS SPECTROMETRY [LARGE SCALE ANALYSIS]</scope>
</reference>
<reference key="10">
    <citation type="journal article" date="2010" name="Mol. Biol. Cell">
        <title>Compartment-specific synthesis of phosphatidylethanolamine is required for normal heavy metal resistance.</title>
        <authorList>
            <person name="Gulshan K."/>
            <person name="Shahi P."/>
            <person name="Moye-Rowley W.S."/>
        </authorList>
    </citation>
    <scope>FUNCTION</scope>
    <scope>SUBCELLULAR LOCATION</scope>
    <scope>MUTAGENESIS OF 1041-GLY--SER-1043</scope>
    <scope>INTERACTION WITH PDR17</scope>
</reference>
<reference key="11">
    <citation type="journal article" date="2014" name="J. Biol. Chem.">
        <title>An assembly of proteins and lipid domains regulates transport of phosphatidylserine to phosphatidylserine decarboxylase 2 in Saccharomyces cerevisiae.</title>
        <authorList>
            <person name="Riekhof W.R."/>
            <person name="Wu W.I."/>
            <person name="Jones J.L."/>
            <person name="Nikrad M."/>
            <person name="Chan M.M."/>
            <person name="Loewen C.J."/>
            <person name="Voelker D.R."/>
        </authorList>
    </citation>
    <scope>FUNCTION</scope>
    <scope>DOMAIN</scope>
    <scope>INTERACTION WITH PDR17</scope>
</reference>
<reference key="12">
    <citation type="journal article" date="2019" name="J. Cell Sci.">
        <title>The mitochondrial phosphatidylserine decarboxylase Psd1 is involved in nitrogen starvation-induced mitophagy in yeast.</title>
        <authorList>
            <person name="Vigie P."/>
            <person name="Cougouilles E."/>
            <person name="Bhatia-Kissova I."/>
            <person name="Salin B."/>
            <person name="Blancard C."/>
            <person name="Camougrand N."/>
        </authorList>
    </citation>
    <scope>DISRUPTION PHENOTYPE</scope>
</reference>
<name>PSD2_YEAST</name>
<comment type="function">
    <text evidence="3 6 7 8 10 11">Catalyzes the formation of phosphatidylethanolamine (PtdEtn) from phosphatidylserine (PtdSer). Plays a central role in phospholipid metabolism and in the interorganelle trafficking of phosphatidylserine (PubMed:24366873, PubMed:7890739, PubMed:7890740). Phosphatidylethanolamine produced by PSD2 is insufficient to completely provide the PtdEtn pool required by mitochondria under respiratory conditions (PubMed:11294902). PSD2 is also involved in the PtdSer transport step to the site of PtdEtn synthesis on the Golgi/endosome membranes (PubMed:24366873). Required for normal heavy metal resistance (PubMed:20016005).</text>
</comment>
<comment type="catalytic activity">
    <reaction evidence="3 10">
        <text>a 1,2-diacyl-sn-glycero-3-phospho-L-serine + H(+) = a 1,2-diacyl-sn-glycero-3-phosphoethanolamine + CO2</text>
        <dbReference type="Rhea" id="RHEA:20828"/>
        <dbReference type="ChEBI" id="CHEBI:15378"/>
        <dbReference type="ChEBI" id="CHEBI:16526"/>
        <dbReference type="ChEBI" id="CHEBI:57262"/>
        <dbReference type="ChEBI" id="CHEBI:64612"/>
        <dbReference type="EC" id="4.1.1.65"/>
    </reaction>
</comment>
<comment type="cofactor">
    <cofactor evidence="2 3">
        <name>pyruvate</name>
        <dbReference type="ChEBI" id="CHEBI:15361"/>
    </cofactor>
    <text evidence="2 3">Binds 1 pyruvoyl group covalently per subunit.</text>
</comment>
<comment type="cofactor">
    <cofactor evidence="4">
        <name>Ca(2+)</name>
        <dbReference type="ChEBI" id="CHEBI:29108"/>
    </cofactor>
</comment>
<comment type="pathway">
    <text evidence="3 18">Phospholipid metabolism; phosphatidylethanolamine biosynthesis; phosphatidylethanolamine from CDP-diacylglycerol: step 2/2.</text>
</comment>
<comment type="subunit">
    <text evidence="2 7 8 17">Heterodimer of a large membrane-associated beta subunit and a small pyruvoyl-containing alpha subunit (By similarity). Interacts with pstB2/PDR17 (PubMed:20016005, PubMed:24366873). This interaction may be a means to structurally tether the donor membrane (ER) harboring PstB2/PDR17 to acceptor membranes (Golgi/endosomes) harboring PSD2 during PtdSer transport to the site of PtdEtn synthesis (PubMed:24366873).</text>
</comment>
<comment type="interaction">
    <interactant intactId="EBI-14018">
        <id>P53037</id>
    </interactant>
    <interactant intactId="EBI-2076838">
        <id>P53844</id>
        <label>PDR17</label>
    </interactant>
    <organismsDiffer>false</organismsDiffer>
    <experiments>4</experiments>
</comment>
<comment type="subcellular location">
    <subcellularLocation>
        <location evidence="3 10">Golgi apparatus membrane</location>
        <topology evidence="3 14 16">Peripheral membrane protein</topology>
        <orientation evidence="3 17">Cytoplasmic side</orientation>
    </subcellularLocation>
    <subcellularLocation>
        <location evidence="3 7">Endosome membrane</location>
        <topology evidence="3 14 16">Peripheral membrane protein</topology>
        <orientation evidence="3 17">Cytoplasmic side</orientation>
    </subcellularLocation>
</comment>
<comment type="domain">
    <text evidence="8 15">The C2 domains have an essential, but non-catalytic function (Probable) (PubMed:24366873). Both C2-1 and C2-2 facilitate interaction with PstB2/PDR17 and are required for lipid transport function (PubMed:24366873).</text>
</comment>
<comment type="PTM">
    <text evidence="3">Is synthesized initially as an inactive proenzyme. Formation of the active enzyme involves a self-maturation process in which the active site pyruvoyl group is generated from an internal serine residue via an autocatalytic post-translational modification. Two non-identical subunits are generated from the proenzyme in this reaction, and the pyruvate is formed at the N-terminus of the alpha chain, which is derived from the carboxyl end of the proenzyme. The autoendoproteolytic cleavage occurs by a canonical serine protease mechanism, in which the side chain hydroxyl group of the serine supplies its oxygen atom to form the C-terminus of the beta chain, while the remainder of the serine residue undergoes an oxidative deamination to produce ammonia and the pyruvoyl prosthetic group on the alpha chain. During this reaction, the Ser that is part of the protease active site of the proenzyme becomes the pyruvoyl prosthetic group, which constitutes an essential element of the active site of the mature decarboxylase.</text>
</comment>
<comment type="disruption phenotype">
    <text evidence="9">Decreases induction of mitophagy in stationary phase following growth on a respiratory carbon source.</text>
</comment>
<comment type="similarity">
    <text evidence="1 2 3">Belongs to the phosphatidylserine decarboxylase family. PSD-B subfamily. Eukaryotic type II sub-subfamily.</text>
</comment>
<keyword id="KW-0106">Calcium</keyword>
<keyword id="KW-0210">Decarboxylase</keyword>
<keyword id="KW-0967">Endosome</keyword>
<keyword id="KW-0333">Golgi apparatus</keyword>
<keyword id="KW-0444">Lipid biosynthesis</keyword>
<keyword id="KW-0443">Lipid metabolism</keyword>
<keyword id="KW-0456">Lyase</keyword>
<keyword id="KW-0472">Membrane</keyword>
<keyword id="KW-0479">Metal-binding</keyword>
<keyword id="KW-0594">Phospholipid biosynthesis</keyword>
<keyword id="KW-1208">Phospholipid metabolism</keyword>
<keyword id="KW-0670">Pyruvate</keyword>
<keyword id="KW-1185">Reference proteome</keyword>
<keyword id="KW-0677">Repeat</keyword>
<keyword id="KW-0865">Zymogen</keyword>
<gene>
    <name evidence="3 12" type="primary">PSD2</name>
    <name evidence="20" type="ordered locus">YGR170W</name>
</gene>
<organism>
    <name type="scientific">Saccharomyces cerevisiae (strain ATCC 204508 / S288c)</name>
    <name type="common">Baker's yeast</name>
    <dbReference type="NCBI Taxonomy" id="559292"/>
    <lineage>
        <taxon>Eukaryota</taxon>
        <taxon>Fungi</taxon>
        <taxon>Dikarya</taxon>
        <taxon>Ascomycota</taxon>
        <taxon>Saccharomycotina</taxon>
        <taxon>Saccharomycetes</taxon>
        <taxon>Saccharomycetales</taxon>
        <taxon>Saccharomycetaceae</taxon>
        <taxon>Saccharomyces</taxon>
    </lineage>
</organism>
<accession>P53037</accession>
<accession>D6VUV4</accession>
<dbReference type="EC" id="4.1.1.65" evidence="3 10"/>
<dbReference type="EMBL" id="U19910">
    <property type="protein sequence ID" value="AAA69819.1"/>
    <property type="molecule type" value="Genomic_DNA"/>
</dbReference>
<dbReference type="EMBL" id="Z72955">
    <property type="protein sequence ID" value="CAA97196.1"/>
    <property type="molecule type" value="Genomic_DNA"/>
</dbReference>
<dbReference type="EMBL" id="BK006941">
    <property type="protein sequence ID" value="DAA08265.1"/>
    <property type="molecule type" value="Genomic_DNA"/>
</dbReference>
<dbReference type="PIR" id="S64484">
    <property type="entry name" value="S64484"/>
</dbReference>
<dbReference type="RefSeq" id="NP_011686.1">
    <property type="nucleotide sequence ID" value="NM_001181299.1"/>
</dbReference>
<dbReference type="SMR" id="P53037"/>
<dbReference type="BioGRID" id="33422">
    <property type="interactions" value="203"/>
</dbReference>
<dbReference type="ComplexPortal" id="CPX-1319">
    <property type="entry name" value="PSTB lipid transfer acceptor membrane complex"/>
</dbReference>
<dbReference type="DIP" id="DIP-6756N"/>
<dbReference type="FunCoup" id="P53037">
    <property type="interactions" value="204"/>
</dbReference>
<dbReference type="IntAct" id="P53037">
    <property type="interactions" value="3"/>
</dbReference>
<dbReference type="MINT" id="P53037"/>
<dbReference type="STRING" id="4932.YGR170W"/>
<dbReference type="GlyGen" id="P53037">
    <property type="glycosylation" value="5 sites, 1 O-linked glycan (3 sites)"/>
</dbReference>
<dbReference type="iPTMnet" id="P53037"/>
<dbReference type="PaxDb" id="4932-YGR170W"/>
<dbReference type="PeptideAtlas" id="P53037"/>
<dbReference type="EnsemblFungi" id="YGR170W_mRNA">
    <property type="protein sequence ID" value="YGR170W"/>
    <property type="gene ID" value="YGR170W"/>
</dbReference>
<dbReference type="GeneID" id="853080"/>
<dbReference type="KEGG" id="sce:YGR170W"/>
<dbReference type="AGR" id="SGD:S000003402"/>
<dbReference type="SGD" id="S000003402">
    <property type="gene designation" value="PSD2"/>
</dbReference>
<dbReference type="VEuPathDB" id="FungiDB:YGR170W"/>
<dbReference type="eggNOG" id="KOG2419">
    <property type="taxonomic scope" value="Eukaryota"/>
</dbReference>
<dbReference type="GeneTree" id="ENSGT00390000013484"/>
<dbReference type="HOGENOM" id="CLU_002661_1_0_1"/>
<dbReference type="InParanoid" id="P53037"/>
<dbReference type="OMA" id="KTSWRKH"/>
<dbReference type="OrthoDB" id="67700at2759"/>
<dbReference type="BioCyc" id="YEAST:YGR170W-MONOMER"/>
<dbReference type="UniPathway" id="UPA00558">
    <property type="reaction ID" value="UER00616"/>
</dbReference>
<dbReference type="BioGRID-ORCS" id="853080">
    <property type="hits" value="2 hits in 10 CRISPR screens"/>
</dbReference>
<dbReference type="PRO" id="PR:P53037"/>
<dbReference type="Proteomes" id="UP000002311">
    <property type="component" value="Chromosome VII"/>
</dbReference>
<dbReference type="RNAct" id="P53037">
    <property type="molecule type" value="protein"/>
</dbReference>
<dbReference type="GO" id="GO:0005768">
    <property type="term" value="C:endosome"/>
    <property type="evidence" value="ECO:0000314"/>
    <property type="project" value="SGD"/>
</dbReference>
<dbReference type="GO" id="GO:0010008">
    <property type="term" value="C:endosome membrane"/>
    <property type="evidence" value="ECO:0000314"/>
    <property type="project" value="ComplexPortal"/>
</dbReference>
<dbReference type="GO" id="GO:0000139">
    <property type="term" value="C:Golgi membrane"/>
    <property type="evidence" value="ECO:0007669"/>
    <property type="project" value="UniProtKB-SubCell"/>
</dbReference>
<dbReference type="GO" id="GO:0005795">
    <property type="term" value="C:Golgi stack"/>
    <property type="evidence" value="ECO:0007669"/>
    <property type="project" value="UniProtKB-UniRule"/>
</dbReference>
<dbReference type="GO" id="GO:0046872">
    <property type="term" value="F:metal ion binding"/>
    <property type="evidence" value="ECO:0007669"/>
    <property type="project" value="UniProtKB-KW"/>
</dbReference>
<dbReference type="GO" id="GO:0004609">
    <property type="term" value="F:phosphatidylserine decarboxylase activity"/>
    <property type="evidence" value="ECO:0000316"/>
    <property type="project" value="SGD"/>
</dbReference>
<dbReference type="GO" id="GO:0120010">
    <property type="term" value="P:intermembrane phospholipid transfer"/>
    <property type="evidence" value="ECO:0000303"/>
    <property type="project" value="ComplexPortal"/>
</dbReference>
<dbReference type="GO" id="GO:0006656">
    <property type="term" value="P:phosphatidylcholine biosynthetic process"/>
    <property type="evidence" value="ECO:0000314"/>
    <property type="project" value="SGD"/>
</dbReference>
<dbReference type="GO" id="GO:0006646">
    <property type="term" value="P:phosphatidylethanolamine biosynthetic process"/>
    <property type="evidence" value="ECO:0007669"/>
    <property type="project" value="UniProtKB-UniRule"/>
</dbReference>
<dbReference type="GO" id="GO:0016540">
    <property type="term" value="P:protein autoprocessing"/>
    <property type="evidence" value="ECO:0007669"/>
    <property type="project" value="UniProtKB-UniRule"/>
</dbReference>
<dbReference type="CDD" id="cd00030">
    <property type="entry name" value="C2"/>
    <property type="match status" value="1"/>
</dbReference>
<dbReference type="CDD" id="cd04039">
    <property type="entry name" value="C2_PSD"/>
    <property type="match status" value="1"/>
</dbReference>
<dbReference type="FunFam" id="2.60.40.150:FF:000249">
    <property type="entry name" value="Phosphatidylserine decarboxylase proenzyme 2"/>
    <property type="match status" value="1"/>
</dbReference>
<dbReference type="Gene3D" id="2.60.40.150">
    <property type="entry name" value="C2 domain"/>
    <property type="match status" value="2"/>
</dbReference>
<dbReference type="HAMAP" id="MF_00663">
    <property type="entry name" value="PS_decarb_PSD_B_type2"/>
    <property type="match status" value="1"/>
</dbReference>
<dbReference type="InterPro" id="IPR000008">
    <property type="entry name" value="C2_dom"/>
</dbReference>
<dbReference type="InterPro" id="IPR035892">
    <property type="entry name" value="C2_domain_sf"/>
</dbReference>
<dbReference type="InterPro" id="IPR003817">
    <property type="entry name" value="PS_Dcarbxylase"/>
</dbReference>
<dbReference type="InterPro" id="IPR033177">
    <property type="entry name" value="PSD-B"/>
</dbReference>
<dbReference type="InterPro" id="IPR033179">
    <property type="entry name" value="PSD_type2_pro"/>
</dbReference>
<dbReference type="NCBIfam" id="TIGR00163">
    <property type="entry name" value="PS_decarb"/>
    <property type="match status" value="1"/>
</dbReference>
<dbReference type="PANTHER" id="PTHR10067">
    <property type="entry name" value="PHOSPHATIDYLSERINE DECARBOXYLASE"/>
    <property type="match status" value="1"/>
</dbReference>
<dbReference type="PANTHER" id="PTHR10067:SF17">
    <property type="entry name" value="PHOSPHATIDYLSERINE DECARBOXYLASE PROENZYME 2"/>
    <property type="match status" value="1"/>
</dbReference>
<dbReference type="Pfam" id="PF00168">
    <property type="entry name" value="C2"/>
    <property type="match status" value="2"/>
</dbReference>
<dbReference type="Pfam" id="PF02666">
    <property type="entry name" value="PS_Dcarbxylase"/>
    <property type="match status" value="1"/>
</dbReference>
<dbReference type="SMART" id="SM00239">
    <property type="entry name" value="C2"/>
    <property type="match status" value="2"/>
</dbReference>
<dbReference type="SUPFAM" id="SSF49562">
    <property type="entry name" value="C2 domain (Calcium/lipid-binding domain, CaLB)"/>
    <property type="match status" value="2"/>
</dbReference>
<dbReference type="PROSITE" id="PS50004">
    <property type="entry name" value="C2"/>
    <property type="match status" value="2"/>
</dbReference>
<evidence type="ECO:0000250" key="1">
    <source>
        <dbReference type="UniProtKB" id="B3L2V1"/>
    </source>
</evidence>
<evidence type="ECO:0000250" key="2">
    <source>
        <dbReference type="UniProtKB" id="P0A8K1"/>
    </source>
</evidence>
<evidence type="ECO:0000255" key="3">
    <source>
        <dbReference type="HAMAP-Rule" id="MF_03209"/>
    </source>
</evidence>
<evidence type="ECO:0000255" key="4">
    <source>
        <dbReference type="PROSITE-ProRule" id="PRU00041"/>
    </source>
</evidence>
<evidence type="ECO:0000256" key="5">
    <source>
        <dbReference type="SAM" id="MobiDB-lite"/>
    </source>
</evidence>
<evidence type="ECO:0000269" key="6">
    <source>
    </source>
</evidence>
<evidence type="ECO:0000269" key="7">
    <source>
    </source>
</evidence>
<evidence type="ECO:0000269" key="8">
    <source>
    </source>
</evidence>
<evidence type="ECO:0000269" key="9">
    <source>
    </source>
</evidence>
<evidence type="ECO:0000269" key="10">
    <source>
    </source>
</evidence>
<evidence type="ECO:0000269" key="11">
    <source>
    </source>
</evidence>
<evidence type="ECO:0000303" key="12">
    <source>
    </source>
</evidence>
<evidence type="ECO:0000305" key="13"/>
<evidence type="ECO:0000305" key="14">
    <source>
    </source>
</evidence>
<evidence type="ECO:0000305" key="15">
    <source>
    </source>
</evidence>
<evidence type="ECO:0000305" key="16">
    <source>
    </source>
</evidence>
<evidence type="ECO:0000305" key="17">
    <source>
    </source>
</evidence>
<evidence type="ECO:0000305" key="18">
    <source>
    </source>
</evidence>
<evidence type="ECO:0000305" key="19">
    <source>
    </source>
</evidence>
<evidence type="ECO:0000312" key="20">
    <source>
        <dbReference type="SGD" id="S000003402"/>
    </source>
</evidence>
<protein>
    <recommendedName>
        <fullName evidence="3 19">Phosphatidylserine decarboxylase proenzyme 2</fullName>
        <ecNumber evidence="3 10">4.1.1.65</ecNumber>
    </recommendedName>
    <component>
        <recommendedName>
            <fullName evidence="3 16">Phosphatidylserine decarboxylase 2 beta chain</fullName>
        </recommendedName>
    </component>
    <component>
        <recommendedName>
            <fullName evidence="3 16">Phosphatidylserine decarboxylase 2 alpha chain</fullName>
        </recommendedName>
    </component>
</protein>
<sequence length="1138" mass="130065">MRIIKGRKRGKNKKPTLILKIHVIQAENIEALKTFNCNPVCFVTTNTFYSQKTNKLKNSNTHWNQTLRIKLPRNPTSEWLRIIVYDALPTGAPPTTPSRPRTTTANTSSSTLSNSGLSSHSHSSRNLNVTSKGNQTSTSINSVSSSATPAPSHSSSSLSTTGPGSTHKNRINSYLYLGEAKISLLDLFKRKDTTTSYKFSIEAQRYHLYDMKGGKDQDSLNCNFLVGDILLGFKLECNVKRTPTFQAFNAWRNELNTYLGRIDRNKARMRSSSSLPPPLEDMLSNSSAVSGNEIRREKPYSDTDLAHDEEVNAEDEIDAEESIEDMNSSGSICTERRYDIDNDTIFDSISEVVSLNDEELDILNDFEEADHPNVPDINVHDIDEDTRISLSSMITALDEYDIVEPEDVAKLPAVSENDITSVDDEESENQQESDEEFDIYNEDEREDSDFQSKEYIGSRLLHLQRGKHNKSYANYLYRRAKSNFFISKKEHAMGVVFMHIGAIKNLPALRNRLSKTNYEMDPFIVISFGRRVFKTSWRKHTLNPEFNEYAAFEVFPHETNFAFSIKVVDKDSFSFNDDVAKCELAWFDMLQQQQHENEWIPYEIPLDLTVEPAHAPKQPVLYSSFKYVSYPFLKKSFWKEAVDTSVNLERLDIIQVMLYLERLGSFTMADSFELFQHFNKSAWAGQSITRSQLVEGLQSWRKSTNFKRIWTCPRCMRSCKPTRNARRSKLVLENDLITHFAICTFSKEHKTLKPSYVSSAFASKRWFSKVLIKLTYGKYALGSNNANILVQDRDTGIIIEEKISAHVKLGMRIIYNGKSPESKKFRSLLKTLSIRQGKKFDSTASAKQIEPFIKFHSLDLSQCRDKDFKTFNEFFYRKLKPGSRLPESNNKEILFSPADSRCTVFPTIQESKEIWVKGRKFSIKKLANNYNPETFNDNNCSIGIFRLAPQDYHRFHSPCNGTIGKPVYVDGEYYTVNPMAVRSELDVFGENIRVIIPIDSPQFGKLLYIPIGAMMVGSILLTCKENDVVESGQELGYFKFGGSTIIIIIPHNNFMFDSDLVKNSSERIETLVKVGMSIGHTSNVNELKRIRIKVDDPKKIERIKRTISVSDENAKSTGNVTWEYHTLREMMNKDFAGL</sequence>
<proteinExistence type="evidence at protein level"/>